<proteinExistence type="inferred from homology"/>
<accession>B5F7K5</accession>
<keyword id="KW-0687">Ribonucleoprotein</keyword>
<keyword id="KW-0689">Ribosomal protein</keyword>
<dbReference type="EMBL" id="CP001138">
    <property type="protein sequence ID" value="ACH50358.1"/>
    <property type="molecule type" value="Genomic_DNA"/>
</dbReference>
<dbReference type="RefSeq" id="WP_000847559.1">
    <property type="nucleotide sequence ID" value="NC_011149.1"/>
</dbReference>
<dbReference type="SMR" id="B5F7K5"/>
<dbReference type="GeneID" id="89518067"/>
<dbReference type="KEGG" id="sea:SeAg_B3536"/>
<dbReference type="HOGENOM" id="CLU_082184_2_2_6"/>
<dbReference type="Proteomes" id="UP000008819">
    <property type="component" value="Chromosome"/>
</dbReference>
<dbReference type="GO" id="GO:0022625">
    <property type="term" value="C:cytosolic large ribosomal subunit"/>
    <property type="evidence" value="ECO:0007669"/>
    <property type="project" value="TreeGrafter"/>
</dbReference>
<dbReference type="GO" id="GO:0003729">
    <property type="term" value="F:mRNA binding"/>
    <property type="evidence" value="ECO:0007669"/>
    <property type="project" value="TreeGrafter"/>
</dbReference>
<dbReference type="GO" id="GO:0003735">
    <property type="term" value="F:structural constituent of ribosome"/>
    <property type="evidence" value="ECO:0007669"/>
    <property type="project" value="InterPro"/>
</dbReference>
<dbReference type="GO" id="GO:0017148">
    <property type="term" value="P:negative regulation of translation"/>
    <property type="evidence" value="ECO:0007669"/>
    <property type="project" value="TreeGrafter"/>
</dbReference>
<dbReference type="GO" id="GO:0006412">
    <property type="term" value="P:translation"/>
    <property type="evidence" value="ECO:0007669"/>
    <property type="project" value="UniProtKB-UniRule"/>
</dbReference>
<dbReference type="CDD" id="cd00392">
    <property type="entry name" value="Ribosomal_L13"/>
    <property type="match status" value="1"/>
</dbReference>
<dbReference type="FunFam" id="3.90.1180.10:FF:000001">
    <property type="entry name" value="50S ribosomal protein L13"/>
    <property type="match status" value="1"/>
</dbReference>
<dbReference type="Gene3D" id="3.90.1180.10">
    <property type="entry name" value="Ribosomal protein L13"/>
    <property type="match status" value="1"/>
</dbReference>
<dbReference type="HAMAP" id="MF_01366">
    <property type="entry name" value="Ribosomal_uL13"/>
    <property type="match status" value="1"/>
</dbReference>
<dbReference type="InterPro" id="IPR005822">
    <property type="entry name" value="Ribosomal_uL13"/>
</dbReference>
<dbReference type="InterPro" id="IPR005823">
    <property type="entry name" value="Ribosomal_uL13_bac-type"/>
</dbReference>
<dbReference type="InterPro" id="IPR023563">
    <property type="entry name" value="Ribosomal_uL13_CS"/>
</dbReference>
<dbReference type="InterPro" id="IPR036899">
    <property type="entry name" value="Ribosomal_uL13_sf"/>
</dbReference>
<dbReference type="NCBIfam" id="TIGR01066">
    <property type="entry name" value="rplM_bact"/>
    <property type="match status" value="1"/>
</dbReference>
<dbReference type="PANTHER" id="PTHR11545:SF2">
    <property type="entry name" value="LARGE RIBOSOMAL SUBUNIT PROTEIN UL13M"/>
    <property type="match status" value="1"/>
</dbReference>
<dbReference type="PANTHER" id="PTHR11545">
    <property type="entry name" value="RIBOSOMAL PROTEIN L13"/>
    <property type="match status" value="1"/>
</dbReference>
<dbReference type="Pfam" id="PF00572">
    <property type="entry name" value="Ribosomal_L13"/>
    <property type="match status" value="1"/>
</dbReference>
<dbReference type="PIRSF" id="PIRSF002181">
    <property type="entry name" value="Ribosomal_L13"/>
    <property type="match status" value="1"/>
</dbReference>
<dbReference type="SUPFAM" id="SSF52161">
    <property type="entry name" value="Ribosomal protein L13"/>
    <property type="match status" value="1"/>
</dbReference>
<dbReference type="PROSITE" id="PS00783">
    <property type="entry name" value="RIBOSOMAL_L13"/>
    <property type="match status" value="1"/>
</dbReference>
<name>RL13_SALA4</name>
<reference key="1">
    <citation type="journal article" date="2011" name="J. Bacteriol.">
        <title>Comparative genomics of 28 Salmonella enterica isolates: evidence for CRISPR-mediated adaptive sublineage evolution.</title>
        <authorList>
            <person name="Fricke W.F."/>
            <person name="Mammel M.K."/>
            <person name="McDermott P.F."/>
            <person name="Tartera C."/>
            <person name="White D.G."/>
            <person name="Leclerc J.E."/>
            <person name="Ravel J."/>
            <person name="Cebula T.A."/>
        </authorList>
    </citation>
    <scope>NUCLEOTIDE SEQUENCE [LARGE SCALE GENOMIC DNA]</scope>
    <source>
        <strain>SL483</strain>
    </source>
</reference>
<comment type="function">
    <text evidence="1">This protein is one of the early assembly proteins of the 50S ribosomal subunit, although it is not seen to bind rRNA by itself. It is important during the early stages of 50S assembly.</text>
</comment>
<comment type="subunit">
    <text evidence="1">Part of the 50S ribosomal subunit.</text>
</comment>
<comment type="similarity">
    <text evidence="1">Belongs to the universal ribosomal protein uL13 family.</text>
</comment>
<sequence>MKTFTAKPETVKRDWYVVDATGKTLGRLATELARRLRGKHKAEYTPHVDTGDYIIVLNADKVAVTGNKRTDKVYYHHTGHIGGIKQATFEEMIARRPERVIEIAVKGMLPKGPLGRAMFRKLKVYAGNEHNHAAQQPQVLDI</sequence>
<feature type="chain" id="PRO_1000144173" description="Large ribosomal subunit protein uL13">
    <location>
        <begin position="1"/>
        <end position="142"/>
    </location>
</feature>
<protein>
    <recommendedName>
        <fullName evidence="1">Large ribosomal subunit protein uL13</fullName>
    </recommendedName>
    <alternativeName>
        <fullName evidence="2">50S ribosomal protein L13</fullName>
    </alternativeName>
</protein>
<organism>
    <name type="scientific">Salmonella agona (strain SL483)</name>
    <dbReference type="NCBI Taxonomy" id="454166"/>
    <lineage>
        <taxon>Bacteria</taxon>
        <taxon>Pseudomonadati</taxon>
        <taxon>Pseudomonadota</taxon>
        <taxon>Gammaproteobacteria</taxon>
        <taxon>Enterobacterales</taxon>
        <taxon>Enterobacteriaceae</taxon>
        <taxon>Salmonella</taxon>
    </lineage>
</organism>
<gene>
    <name evidence="1" type="primary">rplM</name>
    <name type="ordered locus">SeAg_B3536</name>
</gene>
<evidence type="ECO:0000255" key="1">
    <source>
        <dbReference type="HAMAP-Rule" id="MF_01366"/>
    </source>
</evidence>
<evidence type="ECO:0000305" key="2"/>